<name>ZPI_PONAB</name>
<keyword id="KW-0094">Blood coagulation</keyword>
<keyword id="KW-0325">Glycoprotein</keyword>
<keyword id="KW-0356">Hemostasis</keyword>
<keyword id="KW-0358">Heparin-binding</keyword>
<keyword id="KW-0597">Phosphoprotein</keyword>
<keyword id="KW-0646">Protease inhibitor</keyword>
<keyword id="KW-1185">Reference proteome</keyword>
<keyword id="KW-0964">Secreted</keyword>
<keyword id="KW-0722">Serine protease inhibitor</keyword>
<keyword id="KW-0732">Signal</keyword>
<accession>Q5RDA8</accession>
<protein>
    <recommendedName>
        <fullName>Protein Z-dependent protease inhibitor</fullName>
        <shortName>PZ-dependent protease inhibitor</shortName>
        <shortName>PZI</shortName>
    </recommendedName>
    <alternativeName>
        <fullName>Serpin A10</fullName>
    </alternativeName>
</protein>
<proteinExistence type="evidence at transcript level"/>
<gene>
    <name type="primary">SERPINA10</name>
    <name type="synonym">ZPI</name>
</gene>
<sequence>MKVVPSLLLSVLLAQVWLVPGLAPSPQSPETPAPQNQTSRVVQAPREEEEDEQEASEEKAGDEEKAWLTASRQQLAKETSNFGFSLLRKISMRHDGNIVFSPFGTSLAMTGLMLGATGLTETQIKRGLHLQALNPTKPGLLPSLFKGLRETLSRNLELGLTQGSFAFIHKDFDVKETFLNLSKRYFDTECVPMNFRNASQAKRLMNHYINKETRGKIPKLFDEINPETKLILVDYILFKGKWLTPFDPVFTEVDTFHQDKYKTIKVPMMYGAGKFASTFDKNFCCHVLKLPYQGNVTMLVVLMEKMGDQLALEDYLTTDLVETWLRNMKTRNMEVFFPKFKLDQKYEMHELLRQMGIRRISPFADLSELSATGRNLQVSRVLQRTVIEVDERGTEAVAAILSEIIAYSMPPAIKVDRPFHFMIYEETSGMLLFLGRVVNPTLL</sequence>
<comment type="function">
    <text evidence="1">Inhibits activity of the coagulation protease factor Xa in the presence of PROZ, calcium and phospholipids. Also inhibits factor XIa in the absence of cofactors (By similarity).</text>
</comment>
<comment type="subcellular location">
    <subcellularLocation>
        <location evidence="1">Secreted</location>
    </subcellularLocation>
</comment>
<comment type="PTM">
    <text evidence="2">Phosphorylated by FAM20C in the extracellular medium.</text>
</comment>
<comment type="miscellaneous">
    <text evidence="1">Heparin acts as an important cofactor, producing 20 to 100-fold accelerations of SERPINA10 reactions with factor Xa and factor XIa.</text>
</comment>
<comment type="similarity">
    <text evidence="5">Belongs to the serpin family.</text>
</comment>
<organism>
    <name type="scientific">Pongo abelii</name>
    <name type="common">Sumatran orangutan</name>
    <name type="synonym">Pongo pygmaeus abelii</name>
    <dbReference type="NCBI Taxonomy" id="9601"/>
    <lineage>
        <taxon>Eukaryota</taxon>
        <taxon>Metazoa</taxon>
        <taxon>Chordata</taxon>
        <taxon>Craniata</taxon>
        <taxon>Vertebrata</taxon>
        <taxon>Euteleostomi</taxon>
        <taxon>Mammalia</taxon>
        <taxon>Eutheria</taxon>
        <taxon>Euarchontoglires</taxon>
        <taxon>Primates</taxon>
        <taxon>Haplorrhini</taxon>
        <taxon>Catarrhini</taxon>
        <taxon>Hominidae</taxon>
        <taxon>Pongo</taxon>
    </lineage>
</organism>
<dbReference type="EMBL" id="CR858006">
    <property type="protein sequence ID" value="CAH90249.1"/>
    <property type="molecule type" value="mRNA"/>
</dbReference>
<dbReference type="RefSeq" id="NP_001125107.1">
    <property type="nucleotide sequence ID" value="NM_001131635.1"/>
</dbReference>
<dbReference type="SMR" id="Q5RDA8"/>
<dbReference type="FunCoup" id="Q5RDA8">
    <property type="interactions" value="112"/>
</dbReference>
<dbReference type="STRING" id="9601.ENSPPYP00000006936"/>
<dbReference type="MEROPS" id="I04.005"/>
<dbReference type="GlyCosmos" id="Q5RDA8">
    <property type="glycosylation" value="3 sites, No reported glycans"/>
</dbReference>
<dbReference type="GeneID" id="100171989"/>
<dbReference type="KEGG" id="pon:100171989"/>
<dbReference type="CTD" id="51156"/>
<dbReference type="eggNOG" id="KOG2392">
    <property type="taxonomic scope" value="Eukaryota"/>
</dbReference>
<dbReference type="InParanoid" id="Q5RDA8"/>
<dbReference type="OrthoDB" id="10063692at2759"/>
<dbReference type="Proteomes" id="UP000001595">
    <property type="component" value="Unplaced"/>
</dbReference>
<dbReference type="GO" id="GO:0005615">
    <property type="term" value="C:extracellular space"/>
    <property type="evidence" value="ECO:0007669"/>
    <property type="project" value="InterPro"/>
</dbReference>
<dbReference type="GO" id="GO:0008201">
    <property type="term" value="F:heparin binding"/>
    <property type="evidence" value="ECO:0007669"/>
    <property type="project" value="UniProtKB-KW"/>
</dbReference>
<dbReference type="GO" id="GO:0004867">
    <property type="term" value="F:serine-type endopeptidase inhibitor activity"/>
    <property type="evidence" value="ECO:0007669"/>
    <property type="project" value="UniProtKB-KW"/>
</dbReference>
<dbReference type="GO" id="GO:0007596">
    <property type="term" value="P:blood coagulation"/>
    <property type="evidence" value="ECO:0007669"/>
    <property type="project" value="UniProtKB-KW"/>
</dbReference>
<dbReference type="CDD" id="cd02055">
    <property type="entry name" value="serpinA10_PZI"/>
    <property type="match status" value="1"/>
</dbReference>
<dbReference type="FunFam" id="3.30.497.10:FF:000001">
    <property type="entry name" value="Serine protease inhibitor"/>
    <property type="match status" value="1"/>
</dbReference>
<dbReference type="FunFam" id="2.10.310.10:FF:000001">
    <property type="entry name" value="Serpin family A member 1"/>
    <property type="match status" value="1"/>
</dbReference>
<dbReference type="Gene3D" id="2.30.39.10">
    <property type="entry name" value="Alpha-1-antitrypsin, domain 1"/>
    <property type="match status" value="1"/>
</dbReference>
<dbReference type="Gene3D" id="3.30.497.10">
    <property type="entry name" value="Antithrombin, subunit I, domain 2"/>
    <property type="match status" value="1"/>
</dbReference>
<dbReference type="InterPro" id="IPR033835">
    <property type="entry name" value="PZI_serpin_dom"/>
</dbReference>
<dbReference type="InterPro" id="IPR023796">
    <property type="entry name" value="Serpin_dom"/>
</dbReference>
<dbReference type="InterPro" id="IPR000215">
    <property type="entry name" value="Serpin_fam"/>
</dbReference>
<dbReference type="InterPro" id="IPR036186">
    <property type="entry name" value="Serpin_sf"/>
</dbReference>
<dbReference type="InterPro" id="IPR042178">
    <property type="entry name" value="Serpin_sf_1"/>
</dbReference>
<dbReference type="InterPro" id="IPR042185">
    <property type="entry name" value="Serpin_sf_2"/>
</dbReference>
<dbReference type="PANTHER" id="PTHR11461:SF191">
    <property type="entry name" value="PROTEIN Z-DEPENDENT PROTEASE INHIBITOR"/>
    <property type="match status" value="1"/>
</dbReference>
<dbReference type="PANTHER" id="PTHR11461">
    <property type="entry name" value="SERINE PROTEASE INHIBITOR, SERPIN"/>
    <property type="match status" value="1"/>
</dbReference>
<dbReference type="Pfam" id="PF00079">
    <property type="entry name" value="Serpin"/>
    <property type="match status" value="1"/>
</dbReference>
<dbReference type="SMART" id="SM00093">
    <property type="entry name" value="SERPIN"/>
    <property type="match status" value="1"/>
</dbReference>
<dbReference type="SUPFAM" id="SSF56574">
    <property type="entry name" value="Serpins"/>
    <property type="match status" value="1"/>
</dbReference>
<reference key="1">
    <citation type="submission" date="2004-11" db="EMBL/GenBank/DDBJ databases">
        <authorList>
            <consortium name="The German cDNA consortium"/>
        </authorList>
    </citation>
    <scope>NUCLEOTIDE SEQUENCE [LARGE SCALE MRNA]</scope>
    <source>
        <tissue>Kidney</tissue>
    </source>
</reference>
<evidence type="ECO:0000250" key="1"/>
<evidence type="ECO:0000250" key="2">
    <source>
        <dbReference type="UniProtKB" id="Q9UK55"/>
    </source>
</evidence>
<evidence type="ECO:0000255" key="3"/>
<evidence type="ECO:0000256" key="4">
    <source>
        <dbReference type="SAM" id="MobiDB-lite"/>
    </source>
</evidence>
<evidence type="ECO:0000305" key="5"/>
<feature type="signal peptide" evidence="3">
    <location>
        <begin position="1"/>
        <end position="23"/>
    </location>
</feature>
<feature type="chain" id="PRO_0000032484" description="Protein Z-dependent protease inhibitor">
    <location>
        <begin position="24"/>
        <end position="443"/>
    </location>
</feature>
<feature type="region of interest" description="Disordered" evidence="4">
    <location>
        <begin position="24"/>
        <end position="66"/>
    </location>
</feature>
<feature type="region of interest" description="Heparin-binding" evidence="1">
    <location>
        <begin position="136"/>
        <end position="153"/>
    </location>
</feature>
<feature type="compositionally biased region" description="Basic and acidic residues" evidence="4">
    <location>
        <begin position="56"/>
        <end position="66"/>
    </location>
</feature>
<feature type="site" description="Essential for interaction with PROZ" evidence="1">
    <location>
        <position position="261"/>
    </location>
</feature>
<feature type="site" description="Essential for interaction with PROZ" evidence="1">
    <location>
        <position position="314"/>
    </location>
</feature>
<feature type="site" description="Reactive bond" evidence="1">
    <location>
        <begin position="407"/>
        <end position="408"/>
    </location>
</feature>
<feature type="modified residue" description="Phosphoserine" evidence="2">
    <location>
        <position position="56"/>
    </location>
</feature>
<feature type="glycosylation site" description="N-linked (GlcNAc...) asparagine" evidence="3">
    <location>
        <position position="36"/>
    </location>
</feature>
<feature type="glycosylation site" description="N-linked (GlcNAc...) asparagine" evidence="3">
    <location>
        <position position="180"/>
    </location>
</feature>
<feature type="glycosylation site" description="N-linked (GlcNAc...) asparagine" evidence="3">
    <location>
        <position position="295"/>
    </location>
</feature>